<evidence type="ECO:0000255" key="1">
    <source>
        <dbReference type="HAMAP-Rule" id="MF_01007"/>
    </source>
</evidence>
<accession>C4LA17</accession>
<proteinExistence type="inferred from homology"/>
<name>RSMH_TOLAT</name>
<sequence>MEHITVLLQEAVDGLAIRPDGIYVDGTFGRGGHSRLILQQLGPQGRLYAIDRDPQAVAVAKEWQDPRFEIISGPFSSLHEYMAERGLLGKVDGLLLDLGVSSPQLDEAERGFSFMNDGPLDMRMDPLHGESAAEWLLHADVDDIAWVLRTYGEERFANRIARAIVADRVTTPYTRTRQLAEMIARVVPNKEKHKHPATRSFQALRIHVNQELKEIEETLKASLSVLAPGGRLAVISFHSLEDRIVKQFIRQQEKGIQPPRGLPITEDQIRKTQTLHSVGKAIKPADSEVSDNVRSRSSVLRVAERLGG</sequence>
<dbReference type="EC" id="2.1.1.199" evidence="1"/>
<dbReference type="EMBL" id="CP001616">
    <property type="protein sequence ID" value="ACQ92146.1"/>
    <property type="molecule type" value="Genomic_DNA"/>
</dbReference>
<dbReference type="RefSeq" id="WP_012728745.1">
    <property type="nucleotide sequence ID" value="NC_012691.1"/>
</dbReference>
<dbReference type="SMR" id="C4LA17"/>
<dbReference type="STRING" id="595494.Tola_0517"/>
<dbReference type="KEGG" id="tau:Tola_0517"/>
<dbReference type="eggNOG" id="COG0275">
    <property type="taxonomic scope" value="Bacteria"/>
</dbReference>
<dbReference type="HOGENOM" id="CLU_038422_2_0_6"/>
<dbReference type="OrthoDB" id="9806637at2"/>
<dbReference type="Proteomes" id="UP000009073">
    <property type="component" value="Chromosome"/>
</dbReference>
<dbReference type="GO" id="GO:0005737">
    <property type="term" value="C:cytoplasm"/>
    <property type="evidence" value="ECO:0007669"/>
    <property type="project" value="UniProtKB-SubCell"/>
</dbReference>
<dbReference type="GO" id="GO:0071424">
    <property type="term" value="F:rRNA (cytosine-N4-)-methyltransferase activity"/>
    <property type="evidence" value="ECO:0007669"/>
    <property type="project" value="UniProtKB-UniRule"/>
</dbReference>
<dbReference type="GO" id="GO:0070475">
    <property type="term" value="P:rRNA base methylation"/>
    <property type="evidence" value="ECO:0007669"/>
    <property type="project" value="UniProtKB-UniRule"/>
</dbReference>
<dbReference type="FunFam" id="1.10.150.170:FF:000001">
    <property type="entry name" value="Ribosomal RNA small subunit methyltransferase H"/>
    <property type="match status" value="1"/>
</dbReference>
<dbReference type="Gene3D" id="1.10.150.170">
    <property type="entry name" value="Putative methyltransferase TM0872, insert domain"/>
    <property type="match status" value="1"/>
</dbReference>
<dbReference type="Gene3D" id="3.40.50.150">
    <property type="entry name" value="Vaccinia Virus protein VP39"/>
    <property type="match status" value="1"/>
</dbReference>
<dbReference type="HAMAP" id="MF_01007">
    <property type="entry name" value="16SrRNA_methyltr_H"/>
    <property type="match status" value="1"/>
</dbReference>
<dbReference type="InterPro" id="IPR002903">
    <property type="entry name" value="RsmH"/>
</dbReference>
<dbReference type="InterPro" id="IPR023397">
    <property type="entry name" value="SAM-dep_MeTrfase_MraW_recog"/>
</dbReference>
<dbReference type="InterPro" id="IPR029063">
    <property type="entry name" value="SAM-dependent_MTases_sf"/>
</dbReference>
<dbReference type="NCBIfam" id="TIGR00006">
    <property type="entry name" value="16S rRNA (cytosine(1402)-N(4))-methyltransferase RsmH"/>
    <property type="match status" value="1"/>
</dbReference>
<dbReference type="PANTHER" id="PTHR11265:SF0">
    <property type="entry name" value="12S RRNA N4-METHYLCYTIDINE METHYLTRANSFERASE"/>
    <property type="match status" value="1"/>
</dbReference>
<dbReference type="PANTHER" id="PTHR11265">
    <property type="entry name" value="S-ADENOSYL-METHYLTRANSFERASE MRAW"/>
    <property type="match status" value="1"/>
</dbReference>
<dbReference type="Pfam" id="PF01795">
    <property type="entry name" value="Methyltransf_5"/>
    <property type="match status" value="1"/>
</dbReference>
<dbReference type="PIRSF" id="PIRSF004486">
    <property type="entry name" value="MraW"/>
    <property type="match status" value="1"/>
</dbReference>
<dbReference type="SUPFAM" id="SSF81799">
    <property type="entry name" value="Putative methyltransferase TM0872, insert domain"/>
    <property type="match status" value="1"/>
</dbReference>
<dbReference type="SUPFAM" id="SSF53335">
    <property type="entry name" value="S-adenosyl-L-methionine-dependent methyltransferases"/>
    <property type="match status" value="1"/>
</dbReference>
<protein>
    <recommendedName>
        <fullName evidence="1">Ribosomal RNA small subunit methyltransferase H</fullName>
        <ecNumber evidence="1">2.1.1.199</ecNumber>
    </recommendedName>
    <alternativeName>
        <fullName evidence="1">16S rRNA m(4)C1402 methyltransferase</fullName>
    </alternativeName>
    <alternativeName>
        <fullName evidence="1">rRNA (cytosine-N(4)-)-methyltransferase RsmH</fullName>
    </alternativeName>
</protein>
<comment type="function">
    <text evidence="1">Specifically methylates the N4 position of cytidine in position 1402 (C1402) of 16S rRNA.</text>
</comment>
<comment type="catalytic activity">
    <reaction evidence="1">
        <text>cytidine(1402) in 16S rRNA + S-adenosyl-L-methionine = N(4)-methylcytidine(1402) in 16S rRNA + S-adenosyl-L-homocysteine + H(+)</text>
        <dbReference type="Rhea" id="RHEA:42928"/>
        <dbReference type="Rhea" id="RHEA-COMP:10286"/>
        <dbReference type="Rhea" id="RHEA-COMP:10287"/>
        <dbReference type="ChEBI" id="CHEBI:15378"/>
        <dbReference type="ChEBI" id="CHEBI:57856"/>
        <dbReference type="ChEBI" id="CHEBI:59789"/>
        <dbReference type="ChEBI" id="CHEBI:74506"/>
        <dbReference type="ChEBI" id="CHEBI:82748"/>
        <dbReference type="EC" id="2.1.1.199"/>
    </reaction>
</comment>
<comment type="subcellular location">
    <subcellularLocation>
        <location evidence="1">Cytoplasm</location>
    </subcellularLocation>
</comment>
<comment type="similarity">
    <text evidence="1">Belongs to the methyltransferase superfamily. RsmH family.</text>
</comment>
<organism>
    <name type="scientific">Tolumonas auensis (strain DSM 9187 / NBRC 110442 / TA 4)</name>
    <dbReference type="NCBI Taxonomy" id="595494"/>
    <lineage>
        <taxon>Bacteria</taxon>
        <taxon>Pseudomonadati</taxon>
        <taxon>Pseudomonadota</taxon>
        <taxon>Gammaproteobacteria</taxon>
        <taxon>Aeromonadales</taxon>
        <taxon>Aeromonadaceae</taxon>
        <taxon>Tolumonas</taxon>
    </lineage>
</organism>
<reference key="1">
    <citation type="submission" date="2009-05" db="EMBL/GenBank/DDBJ databases">
        <title>Complete sequence of Tolumonas auensis DSM 9187.</title>
        <authorList>
            <consortium name="US DOE Joint Genome Institute"/>
            <person name="Lucas S."/>
            <person name="Copeland A."/>
            <person name="Lapidus A."/>
            <person name="Glavina del Rio T."/>
            <person name="Tice H."/>
            <person name="Bruce D."/>
            <person name="Goodwin L."/>
            <person name="Pitluck S."/>
            <person name="Chertkov O."/>
            <person name="Brettin T."/>
            <person name="Detter J.C."/>
            <person name="Han C."/>
            <person name="Larimer F."/>
            <person name="Land M."/>
            <person name="Hauser L."/>
            <person name="Kyrpides N."/>
            <person name="Mikhailova N."/>
            <person name="Spring S."/>
            <person name="Beller H."/>
        </authorList>
    </citation>
    <scope>NUCLEOTIDE SEQUENCE [LARGE SCALE GENOMIC DNA]</scope>
    <source>
        <strain>DSM 9187 / NBRC 110442 / TA 4</strain>
    </source>
</reference>
<gene>
    <name evidence="1" type="primary">rsmH</name>
    <name type="synonym">mraW</name>
    <name type="ordered locus">Tola_0517</name>
</gene>
<keyword id="KW-0963">Cytoplasm</keyword>
<keyword id="KW-0489">Methyltransferase</keyword>
<keyword id="KW-1185">Reference proteome</keyword>
<keyword id="KW-0698">rRNA processing</keyword>
<keyword id="KW-0949">S-adenosyl-L-methionine</keyword>
<keyword id="KW-0808">Transferase</keyword>
<feature type="chain" id="PRO_0000387199" description="Ribosomal RNA small subunit methyltransferase H">
    <location>
        <begin position="1"/>
        <end position="308"/>
    </location>
</feature>
<feature type="binding site" evidence="1">
    <location>
        <begin position="31"/>
        <end position="33"/>
    </location>
    <ligand>
        <name>S-adenosyl-L-methionine</name>
        <dbReference type="ChEBI" id="CHEBI:59789"/>
    </ligand>
</feature>
<feature type="binding site" evidence="1">
    <location>
        <position position="51"/>
    </location>
    <ligand>
        <name>S-adenosyl-L-methionine</name>
        <dbReference type="ChEBI" id="CHEBI:59789"/>
    </ligand>
</feature>
<feature type="binding site" evidence="1">
    <location>
        <position position="75"/>
    </location>
    <ligand>
        <name>S-adenosyl-L-methionine</name>
        <dbReference type="ChEBI" id="CHEBI:59789"/>
    </ligand>
</feature>
<feature type="binding site" evidence="1">
    <location>
        <position position="97"/>
    </location>
    <ligand>
        <name>S-adenosyl-L-methionine</name>
        <dbReference type="ChEBI" id="CHEBI:59789"/>
    </ligand>
</feature>
<feature type="binding site" evidence="1">
    <location>
        <position position="104"/>
    </location>
    <ligand>
        <name>S-adenosyl-L-methionine</name>
        <dbReference type="ChEBI" id="CHEBI:59789"/>
    </ligand>
</feature>